<proteinExistence type="inferred from homology"/>
<evidence type="ECO:0000255" key="1">
    <source>
        <dbReference type="HAMAP-Rule" id="MF_01456"/>
    </source>
</evidence>
<protein>
    <recommendedName>
        <fullName evidence="1">NADH-quinone oxidoreductase subunit K</fullName>
        <ecNumber evidence="1">7.1.1.-</ecNumber>
    </recommendedName>
    <alternativeName>
        <fullName evidence="1">NADH dehydrogenase I subunit K</fullName>
    </alternativeName>
    <alternativeName>
        <fullName evidence="1">NDH-1 subunit K</fullName>
    </alternativeName>
</protein>
<organism>
    <name type="scientific">Rhizobium johnstonii (strain DSM 114642 / LMG 32736 / 3841)</name>
    <name type="common">Rhizobium leguminosarum bv. viciae</name>
    <dbReference type="NCBI Taxonomy" id="216596"/>
    <lineage>
        <taxon>Bacteria</taxon>
        <taxon>Pseudomonadati</taxon>
        <taxon>Pseudomonadota</taxon>
        <taxon>Alphaproteobacteria</taxon>
        <taxon>Hyphomicrobiales</taxon>
        <taxon>Rhizobiaceae</taxon>
        <taxon>Rhizobium/Agrobacterium group</taxon>
        <taxon>Rhizobium</taxon>
        <taxon>Rhizobium johnstonii</taxon>
    </lineage>
</organism>
<name>NUOK_RHIJ3</name>
<feature type="chain" id="PRO_0000390193" description="NADH-quinone oxidoreductase subunit K">
    <location>
        <begin position="1"/>
        <end position="102"/>
    </location>
</feature>
<feature type="transmembrane region" description="Helical" evidence="1">
    <location>
        <begin position="5"/>
        <end position="25"/>
    </location>
</feature>
<feature type="transmembrane region" description="Helical" evidence="1">
    <location>
        <begin position="31"/>
        <end position="51"/>
    </location>
</feature>
<feature type="transmembrane region" description="Helical" evidence="1">
    <location>
        <begin position="65"/>
        <end position="85"/>
    </location>
</feature>
<reference key="1">
    <citation type="journal article" date="2006" name="Genome Biol.">
        <title>The genome of Rhizobium leguminosarum has recognizable core and accessory components.</title>
        <authorList>
            <person name="Young J.P.W."/>
            <person name="Crossman L.C."/>
            <person name="Johnston A.W.B."/>
            <person name="Thomson N.R."/>
            <person name="Ghazoui Z.F."/>
            <person name="Hull K.H."/>
            <person name="Wexler M."/>
            <person name="Curson A.R.J."/>
            <person name="Todd J.D."/>
            <person name="Poole P.S."/>
            <person name="Mauchline T.H."/>
            <person name="East A.K."/>
            <person name="Quail M.A."/>
            <person name="Churcher C."/>
            <person name="Arrowsmith C."/>
            <person name="Cherevach I."/>
            <person name="Chillingworth T."/>
            <person name="Clarke K."/>
            <person name="Cronin A."/>
            <person name="Davis P."/>
            <person name="Fraser A."/>
            <person name="Hance Z."/>
            <person name="Hauser H."/>
            <person name="Jagels K."/>
            <person name="Moule S."/>
            <person name="Mungall K."/>
            <person name="Norbertczak H."/>
            <person name="Rabbinowitsch E."/>
            <person name="Sanders M."/>
            <person name="Simmonds M."/>
            <person name="Whitehead S."/>
            <person name="Parkhill J."/>
        </authorList>
    </citation>
    <scope>NUCLEOTIDE SEQUENCE [LARGE SCALE GENOMIC DNA]</scope>
    <source>
        <strain>DSM 114642 / LMG 32736 / 3841</strain>
    </source>
</reference>
<comment type="function">
    <text evidence="1">NDH-1 shuttles electrons from NADH, via FMN and iron-sulfur (Fe-S) centers, to quinones in the respiratory chain. The immediate electron acceptor for the enzyme in this species is believed to be ubiquinone. Couples the redox reaction to proton translocation (for every two electrons transferred, four hydrogen ions are translocated across the cytoplasmic membrane), and thus conserves the redox energy in a proton gradient.</text>
</comment>
<comment type="catalytic activity">
    <reaction evidence="1">
        <text>a quinone + NADH + 5 H(+)(in) = a quinol + NAD(+) + 4 H(+)(out)</text>
        <dbReference type="Rhea" id="RHEA:57888"/>
        <dbReference type="ChEBI" id="CHEBI:15378"/>
        <dbReference type="ChEBI" id="CHEBI:24646"/>
        <dbReference type="ChEBI" id="CHEBI:57540"/>
        <dbReference type="ChEBI" id="CHEBI:57945"/>
        <dbReference type="ChEBI" id="CHEBI:132124"/>
    </reaction>
</comment>
<comment type="subunit">
    <text evidence="1">NDH-1 is composed of 14 different subunits. Subunits NuoA, H, J, K, L, M, N constitute the membrane sector of the complex.</text>
</comment>
<comment type="subcellular location">
    <subcellularLocation>
        <location evidence="1">Cell inner membrane</location>
        <topology evidence="1">Multi-pass membrane protein</topology>
    </subcellularLocation>
</comment>
<comment type="similarity">
    <text evidence="1">Belongs to the complex I subunit 4L family.</text>
</comment>
<dbReference type="EC" id="7.1.1.-" evidence="1"/>
<dbReference type="EMBL" id="AM236080">
    <property type="protein sequence ID" value="CAK07206.1"/>
    <property type="molecule type" value="Genomic_DNA"/>
</dbReference>
<dbReference type="RefSeq" id="WP_003547388.1">
    <property type="nucleotide sequence ID" value="NC_008380.1"/>
</dbReference>
<dbReference type="SMR" id="Q1MIK4"/>
<dbReference type="EnsemblBacteria" id="CAK07206">
    <property type="protein sequence ID" value="CAK07206"/>
    <property type="gene ID" value="RL1711"/>
</dbReference>
<dbReference type="GeneID" id="84669416"/>
<dbReference type="KEGG" id="rle:RL1711"/>
<dbReference type="eggNOG" id="COG0713">
    <property type="taxonomic scope" value="Bacteria"/>
</dbReference>
<dbReference type="HOGENOM" id="CLU_144724_2_0_5"/>
<dbReference type="Proteomes" id="UP000006575">
    <property type="component" value="Chromosome"/>
</dbReference>
<dbReference type="GO" id="GO:0030964">
    <property type="term" value="C:NADH dehydrogenase complex"/>
    <property type="evidence" value="ECO:0007669"/>
    <property type="project" value="TreeGrafter"/>
</dbReference>
<dbReference type="GO" id="GO:0005886">
    <property type="term" value="C:plasma membrane"/>
    <property type="evidence" value="ECO:0007669"/>
    <property type="project" value="UniProtKB-SubCell"/>
</dbReference>
<dbReference type="GO" id="GO:0050136">
    <property type="term" value="F:NADH:ubiquinone reductase (non-electrogenic) activity"/>
    <property type="evidence" value="ECO:0007669"/>
    <property type="project" value="UniProtKB-UniRule"/>
</dbReference>
<dbReference type="GO" id="GO:0048038">
    <property type="term" value="F:quinone binding"/>
    <property type="evidence" value="ECO:0007669"/>
    <property type="project" value="UniProtKB-KW"/>
</dbReference>
<dbReference type="GO" id="GO:0042773">
    <property type="term" value="P:ATP synthesis coupled electron transport"/>
    <property type="evidence" value="ECO:0007669"/>
    <property type="project" value="InterPro"/>
</dbReference>
<dbReference type="FunFam" id="1.10.287.3510:FF:000001">
    <property type="entry name" value="NADH-quinone oxidoreductase subunit K"/>
    <property type="match status" value="1"/>
</dbReference>
<dbReference type="Gene3D" id="1.10.287.3510">
    <property type="match status" value="1"/>
</dbReference>
<dbReference type="HAMAP" id="MF_01456">
    <property type="entry name" value="NDH1_NuoK"/>
    <property type="match status" value="1"/>
</dbReference>
<dbReference type="InterPro" id="IPR001133">
    <property type="entry name" value="NADH_UbQ_OxRdtase_chain4L/K"/>
</dbReference>
<dbReference type="InterPro" id="IPR039428">
    <property type="entry name" value="NUOK/Mnh_C1-like"/>
</dbReference>
<dbReference type="NCBIfam" id="NF004320">
    <property type="entry name" value="PRK05715.1-2"/>
    <property type="match status" value="1"/>
</dbReference>
<dbReference type="NCBIfam" id="NF004321">
    <property type="entry name" value="PRK05715.1-3"/>
    <property type="match status" value="1"/>
</dbReference>
<dbReference type="NCBIfam" id="NF004323">
    <property type="entry name" value="PRK05715.1-5"/>
    <property type="match status" value="1"/>
</dbReference>
<dbReference type="PANTHER" id="PTHR11434:SF21">
    <property type="entry name" value="NADH DEHYDROGENASE SUBUNIT 4L-RELATED"/>
    <property type="match status" value="1"/>
</dbReference>
<dbReference type="PANTHER" id="PTHR11434">
    <property type="entry name" value="NADH-UBIQUINONE OXIDOREDUCTASE SUBUNIT ND4L"/>
    <property type="match status" value="1"/>
</dbReference>
<dbReference type="Pfam" id="PF00420">
    <property type="entry name" value="Oxidored_q2"/>
    <property type="match status" value="1"/>
</dbReference>
<gene>
    <name evidence="1" type="primary">nuoK</name>
    <name type="ordered locus">RL1711</name>
</gene>
<sequence>MVIGLSHYLTVSAILFTLGVFGIFLNRKNVIVILMSIELILLAVNINMVAFSSFLNDIVGQVFALFILTVAAAEAAIGLAILVVFYRNRGSIAVEDVNMMKG</sequence>
<keyword id="KW-0997">Cell inner membrane</keyword>
<keyword id="KW-1003">Cell membrane</keyword>
<keyword id="KW-0472">Membrane</keyword>
<keyword id="KW-0520">NAD</keyword>
<keyword id="KW-0874">Quinone</keyword>
<keyword id="KW-1278">Translocase</keyword>
<keyword id="KW-0812">Transmembrane</keyword>
<keyword id="KW-1133">Transmembrane helix</keyword>
<keyword id="KW-0813">Transport</keyword>
<keyword id="KW-0830">Ubiquinone</keyword>
<accession>Q1MIK4</accession>